<comment type="induction">
    <text>By superoxide.</text>
</comment>
<accession>P80863</accession>
<name>SOI5_BACIU</name>
<reference key="1">
    <citation type="journal article" date="1997" name="Electrophoresis">
        <title>First steps from a two-dimensional protein index towards a response-regulation map for Bacillus subtilis.</title>
        <authorList>
            <person name="Antelmann H."/>
            <person name="Bernhardt J."/>
            <person name="Schmid R."/>
            <person name="Mach H."/>
            <person name="Voelker U."/>
            <person name="Hecker M."/>
        </authorList>
    </citation>
    <scope>PROTEIN SEQUENCE</scope>
    <source>
        <strain>168 / IS58</strain>
    </source>
</reference>
<protein>
    <recommendedName>
        <fullName>Superoxide-inducible protein 5</fullName>
        <shortName>SOI5</shortName>
    </recommendedName>
</protein>
<feature type="chain" id="PRO_0000050083" description="Superoxide-inducible protein 5">
    <location>
        <begin position="1"/>
        <end position="12" status="greater than"/>
    </location>
</feature>
<feature type="non-terminal residue">
    <location>
        <position position="12"/>
    </location>
</feature>
<keyword id="KW-0903">Direct protein sequencing</keyword>
<sequence>GNALGKEGLKAI</sequence>
<organism>
    <name type="scientific">Bacillus subtilis</name>
    <dbReference type="NCBI Taxonomy" id="1423"/>
    <lineage>
        <taxon>Bacteria</taxon>
        <taxon>Bacillati</taxon>
        <taxon>Bacillota</taxon>
        <taxon>Bacilli</taxon>
        <taxon>Bacillales</taxon>
        <taxon>Bacillaceae</taxon>
        <taxon>Bacillus</taxon>
    </lineage>
</organism>
<proteinExistence type="evidence at protein level"/>